<reference key="1">
    <citation type="submission" date="2007-10" db="EMBL/GenBank/DDBJ databases">
        <title>Brucella canis ATCC 23365 whole genome shotgun sequencing project.</title>
        <authorList>
            <person name="Setubal J.C."/>
            <person name="Bowns C."/>
            <person name="Boyle S."/>
            <person name="Crasta O.R."/>
            <person name="Czar M.J."/>
            <person name="Dharmanolla C."/>
            <person name="Gillespie J.J."/>
            <person name="Kenyon R.W."/>
            <person name="Lu J."/>
            <person name="Mane S."/>
            <person name="Mohapatra S."/>
            <person name="Nagrani S."/>
            <person name="Purkayastha A."/>
            <person name="Rajasimha H.K."/>
            <person name="Shallom J.M."/>
            <person name="Shallom S."/>
            <person name="Shukla M."/>
            <person name="Snyder E.E."/>
            <person name="Sobral B.W."/>
            <person name="Wattam A.R."/>
            <person name="Will R."/>
            <person name="Williams K."/>
            <person name="Yoo H."/>
            <person name="Bruce D."/>
            <person name="Detter C."/>
            <person name="Munk C."/>
            <person name="Brettin T.S."/>
        </authorList>
    </citation>
    <scope>NUCLEOTIDE SEQUENCE [LARGE SCALE GENOMIC DNA]</scope>
    <source>
        <strain>ATCC 23365 / NCTC 10854 / RM-666</strain>
    </source>
</reference>
<proteinExistence type="inferred from homology"/>
<name>LEXA_BRUC2</name>
<protein>
    <recommendedName>
        <fullName evidence="1">LexA repressor</fullName>
        <ecNumber evidence="1">3.4.21.88</ecNumber>
    </recommendedName>
</protein>
<feature type="chain" id="PRO_1000074048" description="LexA repressor">
    <location>
        <begin position="1"/>
        <end position="240"/>
    </location>
</feature>
<feature type="DNA-binding region" description="H-T-H motif" evidence="1">
    <location>
        <begin position="26"/>
        <end position="46"/>
    </location>
</feature>
<feature type="active site" description="For autocatalytic cleavage activity" evidence="1">
    <location>
        <position position="161"/>
    </location>
</feature>
<feature type="active site" description="For autocatalytic cleavage activity" evidence="1">
    <location>
        <position position="199"/>
    </location>
</feature>
<feature type="site" description="Cleavage; by autolysis" evidence="1">
    <location>
        <begin position="126"/>
        <end position="127"/>
    </location>
</feature>
<evidence type="ECO:0000255" key="1">
    <source>
        <dbReference type="HAMAP-Rule" id="MF_00015"/>
    </source>
</evidence>
<gene>
    <name evidence="1" type="primary">lexA</name>
    <name type="ordered locus">BCAN_A1163</name>
</gene>
<accession>A9M5F7</accession>
<dbReference type="EC" id="3.4.21.88" evidence="1"/>
<dbReference type="EMBL" id="CP000872">
    <property type="protein sequence ID" value="ABX62212.1"/>
    <property type="molecule type" value="Genomic_DNA"/>
</dbReference>
<dbReference type="RefSeq" id="WP_002964272.1">
    <property type="nucleotide sequence ID" value="NC_010103.1"/>
</dbReference>
<dbReference type="SMR" id="A9M5F7"/>
<dbReference type="MEROPS" id="S24.001"/>
<dbReference type="GeneID" id="97533604"/>
<dbReference type="KEGG" id="bcs:BCAN_A1163"/>
<dbReference type="HOGENOM" id="CLU_066192_45_2_5"/>
<dbReference type="PhylomeDB" id="A9M5F7"/>
<dbReference type="Proteomes" id="UP000001385">
    <property type="component" value="Chromosome I"/>
</dbReference>
<dbReference type="GO" id="GO:0003677">
    <property type="term" value="F:DNA binding"/>
    <property type="evidence" value="ECO:0007669"/>
    <property type="project" value="UniProtKB-UniRule"/>
</dbReference>
<dbReference type="GO" id="GO:0004252">
    <property type="term" value="F:serine-type endopeptidase activity"/>
    <property type="evidence" value="ECO:0007669"/>
    <property type="project" value="UniProtKB-UniRule"/>
</dbReference>
<dbReference type="GO" id="GO:0006281">
    <property type="term" value="P:DNA repair"/>
    <property type="evidence" value="ECO:0007669"/>
    <property type="project" value="UniProtKB-UniRule"/>
</dbReference>
<dbReference type="GO" id="GO:0006260">
    <property type="term" value="P:DNA replication"/>
    <property type="evidence" value="ECO:0007669"/>
    <property type="project" value="UniProtKB-UniRule"/>
</dbReference>
<dbReference type="GO" id="GO:0045892">
    <property type="term" value="P:negative regulation of DNA-templated transcription"/>
    <property type="evidence" value="ECO:0007669"/>
    <property type="project" value="UniProtKB-UniRule"/>
</dbReference>
<dbReference type="GO" id="GO:0006508">
    <property type="term" value="P:proteolysis"/>
    <property type="evidence" value="ECO:0007669"/>
    <property type="project" value="InterPro"/>
</dbReference>
<dbReference type="GO" id="GO:0009432">
    <property type="term" value="P:SOS response"/>
    <property type="evidence" value="ECO:0007669"/>
    <property type="project" value="UniProtKB-UniRule"/>
</dbReference>
<dbReference type="CDD" id="cd06529">
    <property type="entry name" value="S24_LexA-like"/>
    <property type="match status" value="1"/>
</dbReference>
<dbReference type="FunFam" id="1.10.10.10:FF:000102">
    <property type="entry name" value="LexA repressor"/>
    <property type="match status" value="1"/>
</dbReference>
<dbReference type="FunFam" id="2.10.109.10:FF:000001">
    <property type="entry name" value="LexA repressor"/>
    <property type="match status" value="1"/>
</dbReference>
<dbReference type="Gene3D" id="2.10.109.10">
    <property type="entry name" value="Umud Fragment, subunit A"/>
    <property type="match status" value="1"/>
</dbReference>
<dbReference type="Gene3D" id="1.10.10.10">
    <property type="entry name" value="Winged helix-like DNA-binding domain superfamily/Winged helix DNA-binding domain"/>
    <property type="match status" value="1"/>
</dbReference>
<dbReference type="HAMAP" id="MF_00015">
    <property type="entry name" value="LexA"/>
    <property type="match status" value="1"/>
</dbReference>
<dbReference type="InterPro" id="IPR006200">
    <property type="entry name" value="LexA"/>
</dbReference>
<dbReference type="InterPro" id="IPR039418">
    <property type="entry name" value="LexA-like"/>
</dbReference>
<dbReference type="InterPro" id="IPR036286">
    <property type="entry name" value="LexA/Signal_pep-like_sf"/>
</dbReference>
<dbReference type="InterPro" id="IPR006199">
    <property type="entry name" value="LexA_DNA-bd_dom"/>
</dbReference>
<dbReference type="InterPro" id="IPR050077">
    <property type="entry name" value="LexA_repressor"/>
</dbReference>
<dbReference type="InterPro" id="IPR006197">
    <property type="entry name" value="Peptidase_S24_LexA"/>
</dbReference>
<dbReference type="InterPro" id="IPR015927">
    <property type="entry name" value="Peptidase_S24_S26A/B/C"/>
</dbReference>
<dbReference type="InterPro" id="IPR036388">
    <property type="entry name" value="WH-like_DNA-bd_sf"/>
</dbReference>
<dbReference type="InterPro" id="IPR036390">
    <property type="entry name" value="WH_DNA-bd_sf"/>
</dbReference>
<dbReference type="NCBIfam" id="TIGR00498">
    <property type="entry name" value="lexA"/>
    <property type="match status" value="1"/>
</dbReference>
<dbReference type="PANTHER" id="PTHR33516">
    <property type="entry name" value="LEXA REPRESSOR"/>
    <property type="match status" value="1"/>
</dbReference>
<dbReference type="PANTHER" id="PTHR33516:SF2">
    <property type="entry name" value="LEXA REPRESSOR-RELATED"/>
    <property type="match status" value="1"/>
</dbReference>
<dbReference type="Pfam" id="PF01726">
    <property type="entry name" value="LexA_DNA_bind"/>
    <property type="match status" value="1"/>
</dbReference>
<dbReference type="Pfam" id="PF00717">
    <property type="entry name" value="Peptidase_S24"/>
    <property type="match status" value="1"/>
</dbReference>
<dbReference type="PRINTS" id="PR00726">
    <property type="entry name" value="LEXASERPTASE"/>
</dbReference>
<dbReference type="SUPFAM" id="SSF51306">
    <property type="entry name" value="LexA/Signal peptidase"/>
    <property type="match status" value="1"/>
</dbReference>
<dbReference type="SUPFAM" id="SSF46785">
    <property type="entry name" value="Winged helix' DNA-binding domain"/>
    <property type="match status" value="1"/>
</dbReference>
<organism>
    <name type="scientific">Brucella canis (strain ATCC 23365 / NCTC 10854 / RM-666)</name>
    <dbReference type="NCBI Taxonomy" id="483179"/>
    <lineage>
        <taxon>Bacteria</taxon>
        <taxon>Pseudomonadati</taxon>
        <taxon>Pseudomonadota</taxon>
        <taxon>Alphaproteobacteria</taxon>
        <taxon>Hyphomicrobiales</taxon>
        <taxon>Brucellaceae</taxon>
        <taxon>Brucella/Ochrobactrum group</taxon>
        <taxon>Brucella</taxon>
    </lineage>
</organism>
<sequence length="240" mass="26070">MLTRKQHELLLFIHERLKETGIPPSFDEMKEALDLASKSGIHRLITALEERGFIRRLPNRARALEVLRLPDSIAPGLSPQKKFAPSVIEGSLGKVASVQPVRPAPAPQNSEAPATVSVPVMGRIAAGVPISAIQNQTHMLSLPPEMIGAGEHYALEVKGDSMIDAGIFDGDTVIIKRGDTANPGEIVVALVDEEEATLKRFRREGASIALEAANPAYETRIFGPDRVHVQGKLVGLIRRY</sequence>
<comment type="function">
    <text evidence="1">Represses a number of genes involved in the response to DNA damage (SOS response), including recA and lexA. In the presence of single-stranded DNA, RecA interacts with LexA causing an autocatalytic cleavage which disrupts the DNA-binding part of LexA, leading to derepression of the SOS regulon and eventually DNA repair.</text>
</comment>
<comment type="catalytic activity">
    <reaction evidence="1">
        <text>Hydrolysis of Ala-|-Gly bond in repressor LexA.</text>
        <dbReference type="EC" id="3.4.21.88"/>
    </reaction>
</comment>
<comment type="subunit">
    <text evidence="1">Homodimer.</text>
</comment>
<comment type="similarity">
    <text evidence="1">Belongs to the peptidase S24 family.</text>
</comment>
<keyword id="KW-0068">Autocatalytic cleavage</keyword>
<keyword id="KW-0227">DNA damage</keyword>
<keyword id="KW-0234">DNA repair</keyword>
<keyword id="KW-0235">DNA replication</keyword>
<keyword id="KW-0238">DNA-binding</keyword>
<keyword id="KW-0378">Hydrolase</keyword>
<keyword id="KW-1185">Reference proteome</keyword>
<keyword id="KW-0678">Repressor</keyword>
<keyword id="KW-0742">SOS response</keyword>
<keyword id="KW-0804">Transcription</keyword>
<keyword id="KW-0805">Transcription regulation</keyword>